<sequence length="121" mass="13115">MYIYWILLGLAIATEITGTLSMKWASVSEGNGGFILMLVMISLSYIFLSFAVKKIALGVAYALWEGIGILFITLFSVLLFDESLSLMKIAGLTTLVAGIVLIKSGTRKARKPELEVNHGAV</sequence>
<feature type="chain" id="PRO_1000197342" description="Spermidine export protein MdtJ">
    <location>
        <begin position="1"/>
        <end position="121"/>
    </location>
</feature>
<feature type="transmembrane region" description="Helical" evidence="1">
    <location>
        <begin position="1"/>
        <end position="21"/>
    </location>
</feature>
<feature type="transmembrane region" description="Helical" evidence="1">
    <location>
        <begin position="32"/>
        <end position="52"/>
    </location>
</feature>
<feature type="transmembrane region" description="Helical" evidence="1">
    <location>
        <begin position="55"/>
        <end position="75"/>
    </location>
</feature>
<feature type="transmembrane region" description="Helical" evidence="1">
    <location>
        <begin position="82"/>
        <end position="102"/>
    </location>
</feature>
<proteinExistence type="inferred from homology"/>
<evidence type="ECO:0000255" key="1">
    <source>
        <dbReference type="HAMAP-Rule" id="MF_01598"/>
    </source>
</evidence>
<accession>B2U1Q9</accession>
<dbReference type="EMBL" id="CP001063">
    <property type="protein sequence ID" value="ACD09948.1"/>
    <property type="molecule type" value="Genomic_DNA"/>
</dbReference>
<dbReference type="RefSeq" id="WP_000276149.1">
    <property type="nucleotide sequence ID" value="NC_010658.1"/>
</dbReference>
<dbReference type="SMR" id="B2U1Q9"/>
<dbReference type="STRING" id="344609.SbBS512_E1786"/>
<dbReference type="GeneID" id="93775748"/>
<dbReference type="KEGG" id="sbc:SbBS512_E1786"/>
<dbReference type="HOGENOM" id="CLU_133067_0_0_6"/>
<dbReference type="Proteomes" id="UP000001030">
    <property type="component" value="Chromosome"/>
</dbReference>
<dbReference type="GO" id="GO:0005886">
    <property type="term" value="C:plasma membrane"/>
    <property type="evidence" value="ECO:0007669"/>
    <property type="project" value="UniProtKB-SubCell"/>
</dbReference>
<dbReference type="GO" id="GO:0015199">
    <property type="term" value="F:amino-acid betaine transmembrane transporter activity"/>
    <property type="evidence" value="ECO:0007669"/>
    <property type="project" value="TreeGrafter"/>
</dbReference>
<dbReference type="GO" id="GO:0015297">
    <property type="term" value="F:antiporter activity"/>
    <property type="evidence" value="ECO:0007669"/>
    <property type="project" value="TreeGrafter"/>
</dbReference>
<dbReference type="GO" id="GO:0015220">
    <property type="term" value="F:choline transmembrane transporter activity"/>
    <property type="evidence" value="ECO:0007669"/>
    <property type="project" value="TreeGrafter"/>
</dbReference>
<dbReference type="GO" id="GO:0015606">
    <property type="term" value="F:spermidine transmembrane transporter activity"/>
    <property type="evidence" value="ECO:0007669"/>
    <property type="project" value="UniProtKB-UniRule"/>
</dbReference>
<dbReference type="GO" id="GO:0031460">
    <property type="term" value="P:glycine betaine transport"/>
    <property type="evidence" value="ECO:0007669"/>
    <property type="project" value="TreeGrafter"/>
</dbReference>
<dbReference type="FunFam" id="1.10.3730.20:FF:000001">
    <property type="entry name" value="Quaternary ammonium compound resistance transporter SugE"/>
    <property type="match status" value="1"/>
</dbReference>
<dbReference type="Gene3D" id="1.10.3730.20">
    <property type="match status" value="1"/>
</dbReference>
<dbReference type="HAMAP" id="MF_01598">
    <property type="entry name" value="MdtJ"/>
    <property type="match status" value="1"/>
</dbReference>
<dbReference type="InterPro" id="IPR000390">
    <property type="entry name" value="Small_drug/metabolite_transptr"/>
</dbReference>
<dbReference type="InterPro" id="IPR045324">
    <property type="entry name" value="Small_multidrug_res"/>
</dbReference>
<dbReference type="InterPro" id="IPR023740">
    <property type="entry name" value="Spermidine_export_MdtJ"/>
</dbReference>
<dbReference type="NCBIfam" id="NF007767">
    <property type="entry name" value="PRK10452.1"/>
    <property type="match status" value="1"/>
</dbReference>
<dbReference type="PANTHER" id="PTHR30561">
    <property type="entry name" value="SMR FAMILY PROTON-DEPENDENT DRUG EFFLUX TRANSPORTER SUGE"/>
    <property type="match status" value="1"/>
</dbReference>
<dbReference type="PANTHER" id="PTHR30561:SF2">
    <property type="entry name" value="SPERMIDINE EXPORT PROTEIN MDTJ"/>
    <property type="match status" value="1"/>
</dbReference>
<dbReference type="Pfam" id="PF00893">
    <property type="entry name" value="Multi_Drug_Res"/>
    <property type="match status" value="1"/>
</dbReference>
<dbReference type="SUPFAM" id="SSF103481">
    <property type="entry name" value="Multidrug resistance efflux transporter EmrE"/>
    <property type="match status" value="1"/>
</dbReference>
<reference key="1">
    <citation type="submission" date="2008-05" db="EMBL/GenBank/DDBJ databases">
        <title>Complete sequence of Shigella boydii serotype 18 strain BS512.</title>
        <authorList>
            <person name="Rasko D.A."/>
            <person name="Rosovitz M."/>
            <person name="Maurelli A.T."/>
            <person name="Myers G."/>
            <person name="Seshadri R."/>
            <person name="Cer R."/>
            <person name="Jiang L."/>
            <person name="Ravel J."/>
            <person name="Sebastian Y."/>
        </authorList>
    </citation>
    <scope>NUCLEOTIDE SEQUENCE [LARGE SCALE GENOMIC DNA]</scope>
    <source>
        <strain>CDC 3083-94 / BS512</strain>
    </source>
</reference>
<keyword id="KW-0997">Cell inner membrane</keyword>
<keyword id="KW-1003">Cell membrane</keyword>
<keyword id="KW-0472">Membrane</keyword>
<keyword id="KW-1185">Reference proteome</keyword>
<keyword id="KW-0812">Transmembrane</keyword>
<keyword id="KW-1133">Transmembrane helix</keyword>
<keyword id="KW-0813">Transport</keyword>
<comment type="function">
    <text evidence="1">Catalyzes the excretion of spermidine.</text>
</comment>
<comment type="subunit">
    <text evidence="1">Forms a complex with MdtI.</text>
</comment>
<comment type="subcellular location">
    <subcellularLocation>
        <location evidence="1">Cell inner membrane</location>
        <topology evidence="1">Multi-pass membrane protein</topology>
    </subcellularLocation>
</comment>
<comment type="similarity">
    <text evidence="1">Belongs to the drug/metabolite transporter (DMT) superfamily. Small multidrug resistance (SMR) (TC 2.A.7.1) family. MdtJ subfamily.</text>
</comment>
<name>MDTJ_SHIB3</name>
<protein>
    <recommendedName>
        <fullName evidence="1">Spermidine export protein MdtJ</fullName>
    </recommendedName>
</protein>
<gene>
    <name evidence="1" type="primary">mdtJ</name>
    <name type="ordered locus">SbBS512_E1786</name>
</gene>
<organism>
    <name type="scientific">Shigella boydii serotype 18 (strain CDC 3083-94 / BS512)</name>
    <dbReference type="NCBI Taxonomy" id="344609"/>
    <lineage>
        <taxon>Bacteria</taxon>
        <taxon>Pseudomonadati</taxon>
        <taxon>Pseudomonadota</taxon>
        <taxon>Gammaproteobacteria</taxon>
        <taxon>Enterobacterales</taxon>
        <taxon>Enterobacteriaceae</taxon>
        <taxon>Shigella</taxon>
    </lineage>
</organism>